<comment type="function">
    <text evidence="1">Binds directly to 16S ribosomal RNA.</text>
</comment>
<comment type="similarity">
    <text evidence="1">Belongs to the bacterial ribosomal protein bS20 family.</text>
</comment>
<reference key="1">
    <citation type="journal article" date="2005" name="PLoS Biol.">
        <title>The Wolbachia genome of Brugia malayi: endosymbiont evolution within a human pathogenic nematode.</title>
        <authorList>
            <person name="Foster J."/>
            <person name="Ganatra M."/>
            <person name="Kamal I."/>
            <person name="Ware J."/>
            <person name="Makarova K."/>
            <person name="Ivanova N."/>
            <person name="Bhattacharyya A."/>
            <person name="Kapatral V."/>
            <person name="Kumar S."/>
            <person name="Posfai J."/>
            <person name="Vincze T."/>
            <person name="Ingram J."/>
            <person name="Moran L."/>
            <person name="Lapidus A."/>
            <person name="Omelchenko M."/>
            <person name="Kyrpides N."/>
            <person name="Ghedin E."/>
            <person name="Wang S."/>
            <person name="Goltsman E."/>
            <person name="Joukov V."/>
            <person name="Ostrovskaya O."/>
            <person name="Tsukerman K."/>
            <person name="Mazur M."/>
            <person name="Comb D."/>
            <person name="Koonin E."/>
            <person name="Slatko B."/>
        </authorList>
    </citation>
    <scope>NUCLEOTIDE SEQUENCE [LARGE SCALE GENOMIC DNA]</scope>
    <source>
        <strain>TRS</strain>
    </source>
</reference>
<gene>
    <name evidence="1" type="primary">rpsT</name>
    <name type="ordered locus">Wbm0734</name>
</gene>
<feature type="chain" id="PRO_0000224992" description="Small ribosomal subunit protein bS20">
    <location>
        <begin position="1"/>
        <end position="89"/>
    </location>
</feature>
<dbReference type="EMBL" id="AE017321">
    <property type="protein sequence ID" value="AAW71322.1"/>
    <property type="molecule type" value="Genomic_DNA"/>
</dbReference>
<dbReference type="RefSeq" id="WP_011256931.1">
    <property type="nucleotide sequence ID" value="NC_006833.1"/>
</dbReference>
<dbReference type="SMR" id="Q5GRQ2"/>
<dbReference type="STRING" id="292805.Wbm0734"/>
<dbReference type="KEGG" id="wbm:Wbm0734"/>
<dbReference type="eggNOG" id="COG0268">
    <property type="taxonomic scope" value="Bacteria"/>
</dbReference>
<dbReference type="HOGENOM" id="CLU_160655_3_0_5"/>
<dbReference type="Proteomes" id="UP000000534">
    <property type="component" value="Chromosome"/>
</dbReference>
<dbReference type="GO" id="GO:0005829">
    <property type="term" value="C:cytosol"/>
    <property type="evidence" value="ECO:0007669"/>
    <property type="project" value="TreeGrafter"/>
</dbReference>
<dbReference type="GO" id="GO:0015935">
    <property type="term" value="C:small ribosomal subunit"/>
    <property type="evidence" value="ECO:0007669"/>
    <property type="project" value="TreeGrafter"/>
</dbReference>
<dbReference type="GO" id="GO:0070181">
    <property type="term" value="F:small ribosomal subunit rRNA binding"/>
    <property type="evidence" value="ECO:0007669"/>
    <property type="project" value="TreeGrafter"/>
</dbReference>
<dbReference type="GO" id="GO:0003735">
    <property type="term" value="F:structural constituent of ribosome"/>
    <property type="evidence" value="ECO:0007669"/>
    <property type="project" value="InterPro"/>
</dbReference>
<dbReference type="GO" id="GO:0006412">
    <property type="term" value="P:translation"/>
    <property type="evidence" value="ECO:0007669"/>
    <property type="project" value="UniProtKB-UniRule"/>
</dbReference>
<dbReference type="Gene3D" id="1.20.58.110">
    <property type="entry name" value="Ribosomal protein S20"/>
    <property type="match status" value="1"/>
</dbReference>
<dbReference type="HAMAP" id="MF_00500">
    <property type="entry name" value="Ribosomal_bS20"/>
    <property type="match status" value="1"/>
</dbReference>
<dbReference type="InterPro" id="IPR002583">
    <property type="entry name" value="Ribosomal_bS20"/>
</dbReference>
<dbReference type="InterPro" id="IPR036510">
    <property type="entry name" value="Ribosomal_bS20_sf"/>
</dbReference>
<dbReference type="NCBIfam" id="TIGR00029">
    <property type="entry name" value="S20"/>
    <property type="match status" value="1"/>
</dbReference>
<dbReference type="PANTHER" id="PTHR33398">
    <property type="entry name" value="30S RIBOSOMAL PROTEIN S20"/>
    <property type="match status" value="1"/>
</dbReference>
<dbReference type="PANTHER" id="PTHR33398:SF1">
    <property type="entry name" value="SMALL RIBOSOMAL SUBUNIT PROTEIN BS20C"/>
    <property type="match status" value="1"/>
</dbReference>
<dbReference type="Pfam" id="PF01649">
    <property type="entry name" value="Ribosomal_S20p"/>
    <property type="match status" value="1"/>
</dbReference>
<dbReference type="SUPFAM" id="SSF46992">
    <property type="entry name" value="Ribosomal protein S20"/>
    <property type="match status" value="1"/>
</dbReference>
<proteinExistence type="inferred from homology"/>
<protein>
    <recommendedName>
        <fullName evidence="1">Small ribosomal subunit protein bS20</fullName>
    </recommendedName>
    <alternativeName>
        <fullName evidence="2">30S ribosomal protein S20</fullName>
    </alternativeName>
</protein>
<organism>
    <name type="scientific">Wolbachia sp. subsp. Brugia malayi (strain TRS)</name>
    <dbReference type="NCBI Taxonomy" id="292805"/>
    <lineage>
        <taxon>Bacteria</taxon>
        <taxon>Pseudomonadati</taxon>
        <taxon>Pseudomonadota</taxon>
        <taxon>Alphaproteobacteria</taxon>
        <taxon>Rickettsiales</taxon>
        <taxon>Anaplasmataceae</taxon>
        <taxon>Wolbachieae</taxon>
        <taxon>Wolbachia</taxon>
    </lineage>
</organism>
<sequence length="89" mass="9979">MVNHKNVKKMIKAIAKRTLINKMRKSKTRTAIRKLVDIIKSGNKENVTPAFRSAESNLHKCVSKGVIHKNTAARKISRLNAKVKALMTA</sequence>
<evidence type="ECO:0000255" key="1">
    <source>
        <dbReference type="HAMAP-Rule" id="MF_00500"/>
    </source>
</evidence>
<evidence type="ECO:0000305" key="2"/>
<accession>Q5GRQ2</accession>
<name>RS20_WOLTR</name>
<keyword id="KW-1185">Reference proteome</keyword>
<keyword id="KW-0687">Ribonucleoprotein</keyword>
<keyword id="KW-0689">Ribosomal protein</keyword>
<keyword id="KW-0694">RNA-binding</keyword>
<keyword id="KW-0699">rRNA-binding</keyword>